<reference key="1">
    <citation type="submission" date="2005-11" db="EMBL/GenBank/DDBJ databases">
        <title>The complete genome sequence of Lawsonia intracellularis: the causative agent of proliferative enteropathy.</title>
        <authorList>
            <person name="Kaur K."/>
            <person name="Zhang Q."/>
            <person name="Beckler D."/>
            <person name="Munir S."/>
            <person name="Li L."/>
            <person name="Kinsley K."/>
            <person name="Herron L."/>
            <person name="Peterson A."/>
            <person name="May B."/>
            <person name="Singh S."/>
            <person name="Gebhart C."/>
            <person name="Kapur V."/>
        </authorList>
    </citation>
    <scope>NUCLEOTIDE SEQUENCE [LARGE SCALE GENOMIC DNA]</scope>
    <source>
        <strain>PHE/MN1-00</strain>
    </source>
</reference>
<evidence type="ECO:0000255" key="1">
    <source>
        <dbReference type="HAMAP-Rule" id="MF_01973"/>
    </source>
</evidence>
<evidence type="ECO:0000255" key="2">
    <source>
        <dbReference type="PROSITE-ProRule" id="PRU01122"/>
    </source>
</evidence>
<evidence type="ECO:0000255" key="3">
    <source>
        <dbReference type="PROSITE-ProRule" id="PRU01123"/>
    </source>
</evidence>
<evidence type="ECO:0000256" key="4">
    <source>
        <dbReference type="SAM" id="MobiDB-lite"/>
    </source>
</evidence>
<feature type="chain" id="PRO_0000396576" description="Lon protease">
    <location>
        <begin position="1"/>
        <end position="830"/>
    </location>
</feature>
<feature type="domain" description="Lon N-terminal" evidence="3">
    <location>
        <begin position="50"/>
        <end position="245"/>
    </location>
</feature>
<feature type="domain" description="Lon proteolytic" evidence="2">
    <location>
        <begin position="633"/>
        <end position="814"/>
    </location>
</feature>
<feature type="region of interest" description="Disordered" evidence="4">
    <location>
        <begin position="1"/>
        <end position="28"/>
    </location>
</feature>
<feature type="active site" evidence="1">
    <location>
        <position position="720"/>
    </location>
</feature>
<feature type="active site" evidence="1">
    <location>
        <position position="763"/>
    </location>
</feature>
<feature type="binding site" evidence="1">
    <location>
        <begin position="397"/>
        <end position="404"/>
    </location>
    <ligand>
        <name>ATP</name>
        <dbReference type="ChEBI" id="CHEBI:30616"/>
    </ligand>
</feature>
<name>LON_LAWIP</name>
<sequence length="830" mass="91804">MTFDTNDDSIAKNSLAPYNQETEQQQEEGAMKINAGTEDDVQPQEIPSSIPILPLRDVVVFNYMIVPLFVGRERSIQAVESATTHGQHIFLCAQKDSQIENPTEEDLYSVGTVALILRLLKMPDGRLKALVQGISRARCLTIHNEDGYLTATVELLQEPQPTVKPTEQEALLRYAREQCEKILALRGIPTGEIMGVLSNVNEPGRLADLIAANLRLKTEEAQEILQCLEPIDRLHLVITHLTHEAEVATMQVKIQTSAREGMDKAQKDYFLREQLKAIRKELGDAIDADEEIEEVSSALNKAGLPAEVRKEVDKQLRRLSTMHADSAEAGVIRTYLDWIAELPWKKTSKDQLDIHKAKTILNEDHYGLVKIKDRILEYLSVRKLNPKSKGPILCFAGPPGVGKTSLGRSIAKSLGRKFQRISLGGMHDEAEIRGHRRTYIGAMPGRLIQAMKQAGTKNPVILLDEIDKLGNDFRGDPSSALLEALDPEQNHNFSDHYLNVPFDLSKVLFLCTANHLEHIPAALKDRLEIISLPGYTQQEKLAIARKYILPKQLKENGLKENELIISDTCLEKIIREYTREAGLRNMEREIGSLCRKVARKKAEGKKPPFRITTNQIEKFLGIPRFIDDDTEKTLPPGVALGLAWTPAGGEILYIEVSTVKGKGNLLLTGQLGDVMKESAQAALSYARSKASSLNISPDFAKSMDIHIHIPAGATPKDGPSAGVTLTTALISALTGKSVRGDLCMTGEITLRGRVLPVGGIKEKVLAGVARGLGHVIIPTKNTKDLEEIPQELKKKIKIHTVSHIDEVLPLAFSETIPVVTKKKQTKQPTS</sequence>
<accession>Q1MS21</accession>
<comment type="function">
    <text evidence="1">ATP-dependent serine protease that mediates the selective degradation of mutant and abnormal proteins as well as certain short-lived regulatory proteins. Required for cellular homeostasis and for survival from DNA damage and developmental changes induced by stress. Degrades polypeptides processively to yield small peptide fragments that are 5 to 10 amino acids long. Binds to DNA in a double-stranded, site-specific manner.</text>
</comment>
<comment type="catalytic activity">
    <reaction evidence="1">
        <text>Hydrolysis of proteins in presence of ATP.</text>
        <dbReference type="EC" id="3.4.21.53"/>
    </reaction>
</comment>
<comment type="subunit">
    <text evidence="1">Homohexamer. Organized in a ring with a central cavity.</text>
</comment>
<comment type="subcellular location">
    <subcellularLocation>
        <location evidence="1">Cytoplasm</location>
    </subcellularLocation>
</comment>
<comment type="induction">
    <text evidence="1">By heat shock.</text>
</comment>
<comment type="similarity">
    <text evidence="1">Belongs to the peptidase S16 family.</text>
</comment>
<protein>
    <recommendedName>
        <fullName evidence="1">Lon protease</fullName>
        <ecNumber evidence="1">3.4.21.53</ecNumber>
    </recommendedName>
    <alternativeName>
        <fullName evidence="1">ATP-dependent protease La</fullName>
    </alternativeName>
</protein>
<keyword id="KW-0067">ATP-binding</keyword>
<keyword id="KW-0963">Cytoplasm</keyword>
<keyword id="KW-0378">Hydrolase</keyword>
<keyword id="KW-0547">Nucleotide-binding</keyword>
<keyword id="KW-0645">Protease</keyword>
<keyword id="KW-1185">Reference proteome</keyword>
<keyword id="KW-0720">Serine protease</keyword>
<keyword id="KW-0346">Stress response</keyword>
<gene>
    <name evidence="1" type="primary">lon</name>
    <name type="ordered locus">LI0148</name>
</gene>
<proteinExistence type="inferred from homology"/>
<organism>
    <name type="scientific">Lawsonia intracellularis (strain PHE/MN1-00)</name>
    <dbReference type="NCBI Taxonomy" id="363253"/>
    <lineage>
        <taxon>Bacteria</taxon>
        <taxon>Pseudomonadati</taxon>
        <taxon>Thermodesulfobacteriota</taxon>
        <taxon>Desulfovibrionia</taxon>
        <taxon>Desulfovibrionales</taxon>
        <taxon>Desulfovibrionaceae</taxon>
        <taxon>Lawsonia</taxon>
    </lineage>
</organism>
<dbReference type="EC" id="3.4.21.53" evidence="1"/>
<dbReference type="EMBL" id="AM180252">
    <property type="protein sequence ID" value="CAJ54204.1"/>
    <property type="molecule type" value="Genomic_DNA"/>
</dbReference>
<dbReference type="RefSeq" id="WP_011526231.1">
    <property type="nucleotide sequence ID" value="NC_008011.1"/>
</dbReference>
<dbReference type="SMR" id="Q1MS21"/>
<dbReference type="STRING" id="363253.LI0148"/>
<dbReference type="MEROPS" id="S16.001"/>
<dbReference type="KEGG" id="lip:LI0148"/>
<dbReference type="eggNOG" id="COG0466">
    <property type="taxonomic scope" value="Bacteria"/>
</dbReference>
<dbReference type="HOGENOM" id="CLU_004109_4_3_7"/>
<dbReference type="OrthoDB" id="9803599at2"/>
<dbReference type="Proteomes" id="UP000002430">
    <property type="component" value="Chromosome"/>
</dbReference>
<dbReference type="GO" id="GO:0005737">
    <property type="term" value="C:cytoplasm"/>
    <property type="evidence" value="ECO:0007669"/>
    <property type="project" value="UniProtKB-SubCell"/>
</dbReference>
<dbReference type="GO" id="GO:0005524">
    <property type="term" value="F:ATP binding"/>
    <property type="evidence" value="ECO:0007669"/>
    <property type="project" value="UniProtKB-UniRule"/>
</dbReference>
<dbReference type="GO" id="GO:0016887">
    <property type="term" value="F:ATP hydrolysis activity"/>
    <property type="evidence" value="ECO:0007669"/>
    <property type="project" value="UniProtKB-UniRule"/>
</dbReference>
<dbReference type="GO" id="GO:0004176">
    <property type="term" value="F:ATP-dependent peptidase activity"/>
    <property type="evidence" value="ECO:0007669"/>
    <property type="project" value="UniProtKB-UniRule"/>
</dbReference>
<dbReference type="GO" id="GO:0043565">
    <property type="term" value="F:sequence-specific DNA binding"/>
    <property type="evidence" value="ECO:0007669"/>
    <property type="project" value="UniProtKB-UniRule"/>
</dbReference>
<dbReference type="GO" id="GO:0004252">
    <property type="term" value="F:serine-type endopeptidase activity"/>
    <property type="evidence" value="ECO:0007669"/>
    <property type="project" value="UniProtKB-UniRule"/>
</dbReference>
<dbReference type="GO" id="GO:0034605">
    <property type="term" value="P:cellular response to heat"/>
    <property type="evidence" value="ECO:0007669"/>
    <property type="project" value="UniProtKB-UniRule"/>
</dbReference>
<dbReference type="GO" id="GO:0006515">
    <property type="term" value="P:protein quality control for misfolded or incompletely synthesized proteins"/>
    <property type="evidence" value="ECO:0007669"/>
    <property type="project" value="UniProtKB-UniRule"/>
</dbReference>
<dbReference type="CDD" id="cd19500">
    <property type="entry name" value="RecA-like_Lon"/>
    <property type="match status" value="1"/>
</dbReference>
<dbReference type="FunFam" id="1.20.5.5270:FF:000002">
    <property type="entry name" value="Lon protease homolog"/>
    <property type="match status" value="1"/>
</dbReference>
<dbReference type="FunFam" id="3.40.50.300:FF:000021">
    <property type="entry name" value="Lon protease homolog"/>
    <property type="match status" value="1"/>
</dbReference>
<dbReference type="Gene3D" id="1.10.8.60">
    <property type="match status" value="1"/>
</dbReference>
<dbReference type="Gene3D" id="1.20.5.5270">
    <property type="match status" value="1"/>
</dbReference>
<dbReference type="Gene3D" id="1.20.58.1480">
    <property type="match status" value="1"/>
</dbReference>
<dbReference type="Gene3D" id="3.30.230.10">
    <property type="match status" value="1"/>
</dbReference>
<dbReference type="Gene3D" id="2.30.130.40">
    <property type="entry name" value="LON domain-like"/>
    <property type="match status" value="1"/>
</dbReference>
<dbReference type="Gene3D" id="3.40.50.300">
    <property type="entry name" value="P-loop containing nucleotide triphosphate hydrolases"/>
    <property type="match status" value="1"/>
</dbReference>
<dbReference type="HAMAP" id="MF_01973">
    <property type="entry name" value="lon_bact"/>
    <property type="match status" value="1"/>
</dbReference>
<dbReference type="InterPro" id="IPR003593">
    <property type="entry name" value="AAA+_ATPase"/>
</dbReference>
<dbReference type="InterPro" id="IPR003959">
    <property type="entry name" value="ATPase_AAA_core"/>
</dbReference>
<dbReference type="InterPro" id="IPR027543">
    <property type="entry name" value="Lon_bac"/>
</dbReference>
<dbReference type="InterPro" id="IPR004815">
    <property type="entry name" value="Lon_bac/euk-typ"/>
</dbReference>
<dbReference type="InterPro" id="IPR054594">
    <property type="entry name" value="Lon_lid"/>
</dbReference>
<dbReference type="InterPro" id="IPR008269">
    <property type="entry name" value="Lon_proteolytic"/>
</dbReference>
<dbReference type="InterPro" id="IPR027065">
    <property type="entry name" value="Lon_Prtase"/>
</dbReference>
<dbReference type="InterPro" id="IPR003111">
    <property type="entry name" value="Lon_prtase_N"/>
</dbReference>
<dbReference type="InterPro" id="IPR046336">
    <property type="entry name" value="Lon_prtase_N_sf"/>
</dbReference>
<dbReference type="InterPro" id="IPR027417">
    <property type="entry name" value="P-loop_NTPase"/>
</dbReference>
<dbReference type="InterPro" id="IPR008268">
    <property type="entry name" value="Peptidase_S16_AS"/>
</dbReference>
<dbReference type="InterPro" id="IPR015947">
    <property type="entry name" value="PUA-like_sf"/>
</dbReference>
<dbReference type="InterPro" id="IPR020568">
    <property type="entry name" value="Ribosomal_Su5_D2-typ_SF"/>
</dbReference>
<dbReference type="InterPro" id="IPR014721">
    <property type="entry name" value="Ribsml_uS5_D2-typ_fold_subgr"/>
</dbReference>
<dbReference type="NCBIfam" id="TIGR00763">
    <property type="entry name" value="lon"/>
    <property type="match status" value="1"/>
</dbReference>
<dbReference type="PANTHER" id="PTHR10046">
    <property type="entry name" value="ATP DEPENDENT LON PROTEASE FAMILY MEMBER"/>
    <property type="match status" value="1"/>
</dbReference>
<dbReference type="Pfam" id="PF00004">
    <property type="entry name" value="AAA"/>
    <property type="match status" value="1"/>
</dbReference>
<dbReference type="Pfam" id="PF05362">
    <property type="entry name" value="Lon_C"/>
    <property type="match status" value="1"/>
</dbReference>
<dbReference type="Pfam" id="PF22667">
    <property type="entry name" value="Lon_lid"/>
    <property type="match status" value="1"/>
</dbReference>
<dbReference type="Pfam" id="PF02190">
    <property type="entry name" value="LON_substr_bdg"/>
    <property type="match status" value="1"/>
</dbReference>
<dbReference type="PIRSF" id="PIRSF001174">
    <property type="entry name" value="Lon_proteas"/>
    <property type="match status" value="1"/>
</dbReference>
<dbReference type="PRINTS" id="PR00830">
    <property type="entry name" value="ENDOLAPTASE"/>
</dbReference>
<dbReference type="SMART" id="SM00382">
    <property type="entry name" value="AAA"/>
    <property type="match status" value="1"/>
</dbReference>
<dbReference type="SMART" id="SM00464">
    <property type="entry name" value="LON"/>
    <property type="match status" value="1"/>
</dbReference>
<dbReference type="SUPFAM" id="SSF52540">
    <property type="entry name" value="P-loop containing nucleoside triphosphate hydrolases"/>
    <property type="match status" value="1"/>
</dbReference>
<dbReference type="SUPFAM" id="SSF88697">
    <property type="entry name" value="PUA domain-like"/>
    <property type="match status" value="1"/>
</dbReference>
<dbReference type="SUPFAM" id="SSF54211">
    <property type="entry name" value="Ribosomal protein S5 domain 2-like"/>
    <property type="match status" value="1"/>
</dbReference>
<dbReference type="PROSITE" id="PS51787">
    <property type="entry name" value="LON_N"/>
    <property type="match status" value="1"/>
</dbReference>
<dbReference type="PROSITE" id="PS51786">
    <property type="entry name" value="LON_PROTEOLYTIC"/>
    <property type="match status" value="1"/>
</dbReference>
<dbReference type="PROSITE" id="PS01046">
    <property type="entry name" value="LON_SER"/>
    <property type="match status" value="1"/>
</dbReference>